<sequence>MDVTTDAGAPWLVAGLGNPGPEYASNRHNVGFMVADLLAERIGARFKRHGKAQAQVVEGRIGPPGPANRRVILAKPMSFMNVSGGPVTALRDFYKVPVGNIVAVHDELDIDYGVLRLKLGGGDNGHNGLKSITKSLGADYHRVRFGIGRPPGRMPVADFVLRDFSSTERKELDYFVDRAADAVEALVIEGLERAQSAYNS</sequence>
<name>PTH_STRCO</name>
<keyword id="KW-0963">Cytoplasm</keyword>
<keyword id="KW-0378">Hydrolase</keyword>
<keyword id="KW-1185">Reference proteome</keyword>
<keyword id="KW-0694">RNA-binding</keyword>
<keyword id="KW-0820">tRNA-binding</keyword>
<protein>
    <recommendedName>
        <fullName evidence="1">Peptidyl-tRNA hydrolase</fullName>
        <shortName evidence="1">Pth</shortName>
        <ecNumber evidence="1">3.1.1.29</ecNumber>
    </recommendedName>
</protein>
<reference key="1">
    <citation type="journal article" date="2002" name="Nature">
        <title>Complete genome sequence of the model actinomycete Streptomyces coelicolor A3(2).</title>
        <authorList>
            <person name="Bentley S.D."/>
            <person name="Chater K.F."/>
            <person name="Cerdeno-Tarraga A.-M."/>
            <person name="Challis G.L."/>
            <person name="Thomson N.R."/>
            <person name="James K.D."/>
            <person name="Harris D.E."/>
            <person name="Quail M.A."/>
            <person name="Kieser H."/>
            <person name="Harper D."/>
            <person name="Bateman A."/>
            <person name="Brown S."/>
            <person name="Chandra G."/>
            <person name="Chen C.W."/>
            <person name="Collins M."/>
            <person name="Cronin A."/>
            <person name="Fraser A."/>
            <person name="Goble A."/>
            <person name="Hidalgo J."/>
            <person name="Hornsby T."/>
            <person name="Howarth S."/>
            <person name="Huang C.-H."/>
            <person name="Kieser T."/>
            <person name="Larke L."/>
            <person name="Murphy L.D."/>
            <person name="Oliver K."/>
            <person name="O'Neil S."/>
            <person name="Rabbinowitsch E."/>
            <person name="Rajandream M.A."/>
            <person name="Rutherford K.M."/>
            <person name="Rutter S."/>
            <person name="Seeger K."/>
            <person name="Saunders D."/>
            <person name="Sharp S."/>
            <person name="Squares R."/>
            <person name="Squares S."/>
            <person name="Taylor K."/>
            <person name="Warren T."/>
            <person name="Wietzorrek A."/>
            <person name="Woodward J.R."/>
            <person name="Barrell B.G."/>
            <person name="Parkhill J."/>
            <person name="Hopwood D.A."/>
        </authorList>
    </citation>
    <scope>NUCLEOTIDE SEQUENCE [LARGE SCALE GENOMIC DNA]</scope>
    <source>
        <strain>ATCC BAA-471 / A3(2) / M145</strain>
    </source>
</reference>
<evidence type="ECO:0000255" key="1">
    <source>
        <dbReference type="HAMAP-Rule" id="MF_00083"/>
    </source>
</evidence>
<feature type="chain" id="PRO_0000187826" description="Peptidyl-tRNA hydrolase">
    <location>
        <begin position="1"/>
        <end position="200"/>
    </location>
</feature>
<feature type="active site" description="Proton acceptor" evidence="1">
    <location>
        <position position="28"/>
    </location>
</feature>
<feature type="binding site" evidence="1">
    <location>
        <position position="23"/>
    </location>
    <ligand>
        <name>tRNA</name>
        <dbReference type="ChEBI" id="CHEBI:17843"/>
    </ligand>
</feature>
<feature type="binding site" evidence="1">
    <location>
        <position position="79"/>
    </location>
    <ligand>
        <name>tRNA</name>
        <dbReference type="ChEBI" id="CHEBI:17843"/>
    </ligand>
</feature>
<feature type="binding site" evidence="1">
    <location>
        <position position="81"/>
    </location>
    <ligand>
        <name>tRNA</name>
        <dbReference type="ChEBI" id="CHEBI:17843"/>
    </ligand>
</feature>
<feature type="binding site" evidence="1">
    <location>
        <position position="127"/>
    </location>
    <ligand>
        <name>tRNA</name>
        <dbReference type="ChEBI" id="CHEBI:17843"/>
    </ligand>
</feature>
<feature type="site" description="Discriminates between blocked and unblocked aminoacyl-tRNA" evidence="1">
    <location>
        <position position="18"/>
    </location>
</feature>
<feature type="site" description="Stabilizes the basic form of H active site to accept a proton" evidence="1">
    <location>
        <position position="106"/>
    </location>
</feature>
<gene>
    <name evidence="1" type="primary">pth</name>
    <name type="ordered locus">SCO3125</name>
    <name type="ORF">SCE66.04</name>
</gene>
<accession>Q9K3T8</accession>
<proteinExistence type="inferred from homology"/>
<dbReference type="EC" id="3.1.1.29" evidence="1"/>
<dbReference type="EMBL" id="AL939115">
    <property type="protein sequence ID" value="CAB95918.1"/>
    <property type="molecule type" value="Genomic_DNA"/>
</dbReference>
<dbReference type="RefSeq" id="NP_627342.1">
    <property type="nucleotide sequence ID" value="NC_003888.3"/>
</dbReference>
<dbReference type="RefSeq" id="WP_003975689.1">
    <property type="nucleotide sequence ID" value="NZ_VNID01000013.1"/>
</dbReference>
<dbReference type="SMR" id="Q9K3T8"/>
<dbReference type="FunCoup" id="Q9K3T8">
    <property type="interactions" value="241"/>
</dbReference>
<dbReference type="STRING" id="100226.gene:17760742"/>
<dbReference type="PaxDb" id="100226-SCO3125"/>
<dbReference type="GeneID" id="91385864"/>
<dbReference type="KEGG" id="sco:SCO3125"/>
<dbReference type="PATRIC" id="fig|100226.15.peg.3189"/>
<dbReference type="eggNOG" id="COG0193">
    <property type="taxonomic scope" value="Bacteria"/>
</dbReference>
<dbReference type="HOGENOM" id="CLU_062456_2_2_11"/>
<dbReference type="InParanoid" id="Q9K3T8"/>
<dbReference type="OrthoDB" id="9800507at2"/>
<dbReference type="PhylomeDB" id="Q9K3T8"/>
<dbReference type="Proteomes" id="UP000001973">
    <property type="component" value="Chromosome"/>
</dbReference>
<dbReference type="GO" id="GO:0005737">
    <property type="term" value="C:cytoplasm"/>
    <property type="evidence" value="ECO:0007669"/>
    <property type="project" value="UniProtKB-SubCell"/>
</dbReference>
<dbReference type="GO" id="GO:0004045">
    <property type="term" value="F:peptidyl-tRNA hydrolase activity"/>
    <property type="evidence" value="ECO:0000318"/>
    <property type="project" value="GO_Central"/>
</dbReference>
<dbReference type="GO" id="GO:0000049">
    <property type="term" value="F:tRNA binding"/>
    <property type="evidence" value="ECO:0007669"/>
    <property type="project" value="UniProtKB-UniRule"/>
</dbReference>
<dbReference type="GO" id="GO:0006515">
    <property type="term" value="P:protein quality control for misfolded or incompletely synthesized proteins"/>
    <property type="evidence" value="ECO:0007669"/>
    <property type="project" value="UniProtKB-UniRule"/>
</dbReference>
<dbReference type="GO" id="GO:0072344">
    <property type="term" value="P:rescue of stalled ribosome"/>
    <property type="evidence" value="ECO:0007669"/>
    <property type="project" value="UniProtKB-UniRule"/>
</dbReference>
<dbReference type="CDD" id="cd00462">
    <property type="entry name" value="PTH"/>
    <property type="match status" value="1"/>
</dbReference>
<dbReference type="FunFam" id="3.40.50.1470:FF:000001">
    <property type="entry name" value="Peptidyl-tRNA hydrolase"/>
    <property type="match status" value="1"/>
</dbReference>
<dbReference type="Gene3D" id="3.40.50.1470">
    <property type="entry name" value="Peptidyl-tRNA hydrolase"/>
    <property type="match status" value="1"/>
</dbReference>
<dbReference type="HAMAP" id="MF_00083">
    <property type="entry name" value="Pept_tRNA_hydro_bact"/>
    <property type="match status" value="1"/>
</dbReference>
<dbReference type="InterPro" id="IPR001328">
    <property type="entry name" value="Pept_tRNA_hydro"/>
</dbReference>
<dbReference type="InterPro" id="IPR018171">
    <property type="entry name" value="Pept_tRNA_hydro_CS"/>
</dbReference>
<dbReference type="InterPro" id="IPR036416">
    <property type="entry name" value="Pept_tRNA_hydro_sf"/>
</dbReference>
<dbReference type="NCBIfam" id="TIGR00447">
    <property type="entry name" value="pth"/>
    <property type="match status" value="1"/>
</dbReference>
<dbReference type="PANTHER" id="PTHR17224">
    <property type="entry name" value="PEPTIDYL-TRNA HYDROLASE"/>
    <property type="match status" value="1"/>
</dbReference>
<dbReference type="PANTHER" id="PTHR17224:SF1">
    <property type="entry name" value="PEPTIDYL-TRNA HYDROLASE"/>
    <property type="match status" value="1"/>
</dbReference>
<dbReference type="Pfam" id="PF01195">
    <property type="entry name" value="Pept_tRNA_hydro"/>
    <property type="match status" value="1"/>
</dbReference>
<dbReference type="SUPFAM" id="SSF53178">
    <property type="entry name" value="Peptidyl-tRNA hydrolase-like"/>
    <property type="match status" value="1"/>
</dbReference>
<dbReference type="PROSITE" id="PS01195">
    <property type="entry name" value="PEPT_TRNA_HYDROL_1"/>
    <property type="match status" value="1"/>
</dbReference>
<dbReference type="PROSITE" id="PS01196">
    <property type="entry name" value="PEPT_TRNA_HYDROL_2"/>
    <property type="match status" value="1"/>
</dbReference>
<comment type="function">
    <text evidence="1">Hydrolyzes ribosome-free peptidyl-tRNAs (with 1 or more amino acids incorporated), which drop off the ribosome during protein synthesis, or as a result of ribosome stalling.</text>
</comment>
<comment type="function">
    <text evidence="1">Catalyzes the release of premature peptidyl moieties from peptidyl-tRNA molecules trapped in stalled 50S ribosomal subunits, and thus maintains levels of free tRNAs and 50S ribosomes.</text>
</comment>
<comment type="catalytic activity">
    <reaction evidence="1">
        <text>an N-acyl-L-alpha-aminoacyl-tRNA + H2O = an N-acyl-L-amino acid + a tRNA + H(+)</text>
        <dbReference type="Rhea" id="RHEA:54448"/>
        <dbReference type="Rhea" id="RHEA-COMP:10123"/>
        <dbReference type="Rhea" id="RHEA-COMP:13883"/>
        <dbReference type="ChEBI" id="CHEBI:15377"/>
        <dbReference type="ChEBI" id="CHEBI:15378"/>
        <dbReference type="ChEBI" id="CHEBI:59874"/>
        <dbReference type="ChEBI" id="CHEBI:78442"/>
        <dbReference type="ChEBI" id="CHEBI:138191"/>
        <dbReference type="EC" id="3.1.1.29"/>
    </reaction>
</comment>
<comment type="subunit">
    <text evidence="1">Monomer.</text>
</comment>
<comment type="subcellular location">
    <subcellularLocation>
        <location evidence="1">Cytoplasm</location>
    </subcellularLocation>
</comment>
<comment type="similarity">
    <text evidence="1">Belongs to the PTH family.</text>
</comment>
<organism>
    <name type="scientific">Streptomyces coelicolor (strain ATCC BAA-471 / A3(2) / M145)</name>
    <dbReference type="NCBI Taxonomy" id="100226"/>
    <lineage>
        <taxon>Bacteria</taxon>
        <taxon>Bacillati</taxon>
        <taxon>Actinomycetota</taxon>
        <taxon>Actinomycetes</taxon>
        <taxon>Kitasatosporales</taxon>
        <taxon>Streptomycetaceae</taxon>
        <taxon>Streptomyces</taxon>
        <taxon>Streptomyces albidoflavus group</taxon>
    </lineage>
</organism>